<dbReference type="EMBL" id="CP000103">
    <property type="protein sequence ID" value="ABB73965.1"/>
    <property type="molecule type" value="Genomic_DNA"/>
</dbReference>
<dbReference type="RefSeq" id="WP_011380015.1">
    <property type="nucleotide sequence ID" value="NC_007614.1"/>
</dbReference>
<dbReference type="SMR" id="Q2YBA6"/>
<dbReference type="STRING" id="323848.Nmul_A0658"/>
<dbReference type="KEGG" id="nmu:Nmul_A0658"/>
<dbReference type="eggNOG" id="COG0264">
    <property type="taxonomic scope" value="Bacteria"/>
</dbReference>
<dbReference type="HOGENOM" id="CLU_047155_0_2_4"/>
<dbReference type="OrthoDB" id="9808348at2"/>
<dbReference type="Proteomes" id="UP000002718">
    <property type="component" value="Chromosome"/>
</dbReference>
<dbReference type="GO" id="GO:0005737">
    <property type="term" value="C:cytoplasm"/>
    <property type="evidence" value="ECO:0007669"/>
    <property type="project" value="UniProtKB-SubCell"/>
</dbReference>
<dbReference type="GO" id="GO:0003746">
    <property type="term" value="F:translation elongation factor activity"/>
    <property type="evidence" value="ECO:0007669"/>
    <property type="project" value="UniProtKB-UniRule"/>
</dbReference>
<dbReference type="CDD" id="cd14275">
    <property type="entry name" value="UBA_EF-Ts"/>
    <property type="match status" value="1"/>
</dbReference>
<dbReference type="FunFam" id="1.10.286.20:FF:000001">
    <property type="entry name" value="Elongation factor Ts"/>
    <property type="match status" value="1"/>
</dbReference>
<dbReference type="FunFam" id="1.10.8.10:FF:000001">
    <property type="entry name" value="Elongation factor Ts"/>
    <property type="match status" value="1"/>
</dbReference>
<dbReference type="Gene3D" id="1.10.286.20">
    <property type="match status" value="1"/>
</dbReference>
<dbReference type="Gene3D" id="1.10.8.10">
    <property type="entry name" value="DNA helicase RuvA subunit, C-terminal domain"/>
    <property type="match status" value="1"/>
</dbReference>
<dbReference type="Gene3D" id="3.30.479.20">
    <property type="entry name" value="Elongation factor Ts, dimerisation domain"/>
    <property type="match status" value="2"/>
</dbReference>
<dbReference type="HAMAP" id="MF_00050">
    <property type="entry name" value="EF_Ts"/>
    <property type="match status" value="1"/>
</dbReference>
<dbReference type="InterPro" id="IPR036402">
    <property type="entry name" value="EF-Ts_dimer_sf"/>
</dbReference>
<dbReference type="InterPro" id="IPR001816">
    <property type="entry name" value="Transl_elong_EFTs/EF1B"/>
</dbReference>
<dbReference type="InterPro" id="IPR014039">
    <property type="entry name" value="Transl_elong_EFTs/EF1B_dimer"/>
</dbReference>
<dbReference type="InterPro" id="IPR018101">
    <property type="entry name" value="Transl_elong_Ts_CS"/>
</dbReference>
<dbReference type="InterPro" id="IPR009060">
    <property type="entry name" value="UBA-like_sf"/>
</dbReference>
<dbReference type="NCBIfam" id="TIGR00116">
    <property type="entry name" value="tsf"/>
    <property type="match status" value="1"/>
</dbReference>
<dbReference type="PANTHER" id="PTHR11741">
    <property type="entry name" value="ELONGATION FACTOR TS"/>
    <property type="match status" value="1"/>
</dbReference>
<dbReference type="PANTHER" id="PTHR11741:SF0">
    <property type="entry name" value="ELONGATION FACTOR TS, MITOCHONDRIAL"/>
    <property type="match status" value="1"/>
</dbReference>
<dbReference type="Pfam" id="PF00889">
    <property type="entry name" value="EF_TS"/>
    <property type="match status" value="1"/>
</dbReference>
<dbReference type="SUPFAM" id="SSF54713">
    <property type="entry name" value="Elongation factor Ts (EF-Ts), dimerisation domain"/>
    <property type="match status" value="2"/>
</dbReference>
<dbReference type="SUPFAM" id="SSF46934">
    <property type="entry name" value="UBA-like"/>
    <property type="match status" value="1"/>
</dbReference>
<dbReference type="PROSITE" id="PS01126">
    <property type="entry name" value="EF_TS_1"/>
    <property type="match status" value="1"/>
</dbReference>
<dbReference type="PROSITE" id="PS01127">
    <property type="entry name" value="EF_TS_2"/>
    <property type="match status" value="1"/>
</dbReference>
<sequence>MAEITAQMVKELREITGLGMMECKKALTEASGDMKAAEDLLRIKSGAKASKAAGRTAAEGIVAAHIARDGKSGALVEVNCETDFVARNEDFIGFAHSLAELLTTESIGDNEALANARLSNGESVEEFRKALVMKLGENISIRRFARHQVAGAQDRLASYLHGAKIGVMVDYTGGDPALGKDLAMHIAASKPVCVSSEQVSPELLERERQIYTAQAAESGKPADIVARMVDGRIAKYLAEITLLGQPFVKNPDQTVKQLLAEKSAQVNGFTLYIVGEGIEKKSGDFAAEVMAQVGQAKQEKAS</sequence>
<name>EFTS_NITMU</name>
<accession>Q2YBA6</accession>
<evidence type="ECO:0000255" key="1">
    <source>
        <dbReference type="HAMAP-Rule" id="MF_00050"/>
    </source>
</evidence>
<gene>
    <name evidence="1" type="primary">tsf</name>
    <name type="ordered locus">Nmul_A0658</name>
</gene>
<feature type="chain" id="PRO_0000241501" description="Elongation factor Ts">
    <location>
        <begin position="1"/>
        <end position="302"/>
    </location>
</feature>
<feature type="region of interest" description="Involved in Mg(2+) ion dislocation from EF-Tu" evidence="1">
    <location>
        <begin position="82"/>
        <end position="85"/>
    </location>
</feature>
<proteinExistence type="inferred from homology"/>
<keyword id="KW-0963">Cytoplasm</keyword>
<keyword id="KW-0251">Elongation factor</keyword>
<keyword id="KW-0648">Protein biosynthesis</keyword>
<keyword id="KW-1185">Reference proteome</keyword>
<comment type="function">
    <text evidence="1">Associates with the EF-Tu.GDP complex and induces the exchange of GDP to GTP. It remains bound to the aminoacyl-tRNA.EF-Tu.GTP complex up to the GTP hydrolysis stage on the ribosome.</text>
</comment>
<comment type="subcellular location">
    <subcellularLocation>
        <location evidence="1">Cytoplasm</location>
    </subcellularLocation>
</comment>
<comment type="similarity">
    <text evidence="1">Belongs to the EF-Ts family.</text>
</comment>
<reference key="1">
    <citation type="submission" date="2005-08" db="EMBL/GenBank/DDBJ databases">
        <title>Complete sequence of chromosome 1 of Nitrosospira multiformis ATCC 25196.</title>
        <authorList>
            <person name="Copeland A."/>
            <person name="Lucas S."/>
            <person name="Lapidus A."/>
            <person name="Barry K."/>
            <person name="Detter J.C."/>
            <person name="Glavina T."/>
            <person name="Hammon N."/>
            <person name="Israni S."/>
            <person name="Pitluck S."/>
            <person name="Chain P."/>
            <person name="Malfatti S."/>
            <person name="Shin M."/>
            <person name="Vergez L."/>
            <person name="Schmutz J."/>
            <person name="Larimer F."/>
            <person name="Land M."/>
            <person name="Hauser L."/>
            <person name="Kyrpides N."/>
            <person name="Lykidis A."/>
            <person name="Richardson P."/>
        </authorList>
    </citation>
    <scope>NUCLEOTIDE SEQUENCE [LARGE SCALE GENOMIC DNA]</scope>
    <source>
        <strain>ATCC 25196 / NCIMB 11849 / C 71</strain>
    </source>
</reference>
<organism>
    <name type="scientific">Nitrosospira multiformis (strain ATCC 25196 / NCIMB 11849 / C 71)</name>
    <dbReference type="NCBI Taxonomy" id="323848"/>
    <lineage>
        <taxon>Bacteria</taxon>
        <taxon>Pseudomonadati</taxon>
        <taxon>Pseudomonadota</taxon>
        <taxon>Betaproteobacteria</taxon>
        <taxon>Nitrosomonadales</taxon>
        <taxon>Nitrosomonadaceae</taxon>
        <taxon>Nitrosospira</taxon>
    </lineage>
</organism>
<protein>
    <recommendedName>
        <fullName evidence="1">Elongation factor Ts</fullName>
        <shortName evidence="1">EF-Ts</shortName>
    </recommendedName>
</protein>